<feature type="signal peptide" evidence="3">
    <location>
        <begin position="1"/>
        <end position="17"/>
    </location>
</feature>
<feature type="chain" id="PRO_0000017998" description="Basic membrane protein A1">
    <location>
        <begin position="18"/>
        <end position="337"/>
    </location>
</feature>
<feature type="lipid moiety-binding region" description="N-palmitoyl cysteine" evidence="3">
    <location>
        <position position="18"/>
    </location>
</feature>
<feature type="lipid moiety-binding region" description="S-diacylglycerol cysteine" evidence="3">
    <location>
        <position position="18"/>
    </location>
</feature>
<protein>
    <recommendedName>
        <fullName>Basic membrane protein A1</fullName>
    </recommendedName>
    <alternativeName>
        <fullName>Immunodominant antigen P39</fullName>
    </alternativeName>
    <alternativeName>
        <fullName evidence="2">Probable substrate-binding protein BmpA1</fullName>
    </alternativeName>
</protein>
<evidence type="ECO:0000250" key="1">
    <source>
        <dbReference type="UniProtKB" id="P0CL55"/>
    </source>
</evidence>
<evidence type="ECO:0000250" key="2">
    <source>
        <dbReference type="UniProtKB" id="Q45010"/>
    </source>
</evidence>
<evidence type="ECO:0000305" key="3"/>
<organism>
    <name type="scientific">Borrelia garinii subsp. bavariensis (strain ATCC BAA-2496 / DSM 23469 / PBi)</name>
    <name type="common">Borreliella bavariensis</name>
    <dbReference type="NCBI Taxonomy" id="290434"/>
    <lineage>
        <taxon>Bacteria</taxon>
        <taxon>Pseudomonadati</taxon>
        <taxon>Spirochaetota</taxon>
        <taxon>Spirochaetia</taxon>
        <taxon>Spirochaetales</taxon>
        <taxon>Borreliaceae</taxon>
        <taxon>Borreliella</taxon>
    </lineage>
</organism>
<dbReference type="EMBL" id="CP000013">
    <property type="protein sequence ID" value="AAU07235.1"/>
    <property type="molecule type" value="Genomic_DNA"/>
</dbReference>
<dbReference type="RefSeq" id="WP_011193709.1">
    <property type="nucleotide sequence ID" value="NC_006156.1"/>
</dbReference>
<dbReference type="SMR" id="Q661N6"/>
<dbReference type="GeneID" id="45161170"/>
<dbReference type="KEGG" id="bga:BG0382"/>
<dbReference type="eggNOG" id="COG1744">
    <property type="taxonomic scope" value="Bacteria"/>
</dbReference>
<dbReference type="HOGENOM" id="CLU_038813_0_2_12"/>
<dbReference type="OrthoDB" id="9769871at2"/>
<dbReference type="Proteomes" id="UP000002276">
    <property type="component" value="Chromosome"/>
</dbReference>
<dbReference type="GO" id="GO:0005886">
    <property type="term" value="C:plasma membrane"/>
    <property type="evidence" value="ECO:0007669"/>
    <property type="project" value="UniProtKB-SubCell"/>
</dbReference>
<dbReference type="CDD" id="cd06354">
    <property type="entry name" value="PBP1_PrnA-like"/>
    <property type="match status" value="1"/>
</dbReference>
<dbReference type="Gene3D" id="3.40.50.2300">
    <property type="match status" value="2"/>
</dbReference>
<dbReference type="InterPro" id="IPR050957">
    <property type="entry name" value="BMP_lipoprotein"/>
</dbReference>
<dbReference type="InterPro" id="IPR028082">
    <property type="entry name" value="Peripla_BP_I"/>
</dbReference>
<dbReference type="InterPro" id="IPR003760">
    <property type="entry name" value="PnrA-like"/>
</dbReference>
<dbReference type="PANTHER" id="PTHR34296:SF2">
    <property type="entry name" value="ABC TRANSPORTER GUANOSINE-BINDING PROTEIN NUPN"/>
    <property type="match status" value="1"/>
</dbReference>
<dbReference type="PANTHER" id="PTHR34296">
    <property type="entry name" value="TRANSCRIPTIONAL ACTIVATOR PROTEIN MED"/>
    <property type="match status" value="1"/>
</dbReference>
<dbReference type="Pfam" id="PF02608">
    <property type="entry name" value="Bmp"/>
    <property type="match status" value="1"/>
</dbReference>
<dbReference type="SUPFAM" id="SSF53822">
    <property type="entry name" value="Periplasmic binding protein-like I"/>
    <property type="match status" value="1"/>
</dbReference>
<gene>
    <name type="primary">bmpA1</name>
    <name type="synonym">bmpA-1</name>
    <name type="ordered locus">BG0382</name>
</gene>
<proteinExistence type="inferred from homology"/>
<comment type="function">
    <text evidence="2">Immunogenic protein. May be part of an ABC-type nucleoside uptake system involved in the purine salvage pathway.</text>
</comment>
<comment type="subunit">
    <text evidence="1">Monomer.</text>
</comment>
<comment type="subcellular location">
    <subcellularLocation>
        <location evidence="3">Cell inner membrane</location>
        <topology evidence="3">Lipid-anchor</topology>
    </subcellularLocation>
</comment>
<comment type="similarity">
    <text evidence="3">Belongs to the BMP lipoprotein family.</text>
</comment>
<accession>Q661N6</accession>
<name>BMPA1_BORGP</name>
<reference key="1">
    <citation type="journal article" date="2004" name="Nucleic Acids Res.">
        <title>Comparative analysis of the Borrelia garinii genome.</title>
        <authorList>
            <person name="Gloeckner G."/>
            <person name="Lehmann R."/>
            <person name="Romualdi A."/>
            <person name="Pradella S."/>
            <person name="Schulte-Spechtel U."/>
            <person name="Schilhabel M."/>
            <person name="Wilske B."/>
            <person name="Suehnel J."/>
            <person name="Platzer M."/>
        </authorList>
    </citation>
    <scope>NUCLEOTIDE SEQUENCE [LARGE SCALE GENOMIC DNA]</scope>
    <source>
        <strain>ATCC BAA-2496 / DSM 23469 / PBi</strain>
    </source>
</reference>
<sequence length="337" mass="36862">MNKLLLLILFECIIFLSCSGKGSLESEIPKVSLIIDGTFDDKSFNESALNGIKKVKEEFKIEPVLKESSTNSYLSDLEGLKDTGSNLIWLIGYKFSDVAKSVSLQNPEIKYAIIDPVYSDEPIPANLVGMTFRSQEGAFLTGYIAAKVSKTGKIGFLGGIEGEIVDAFRYGYEAGAKYANKDIKISAYYIGSFADLEAGRSVATKMYSDGIDIIHHAAGLGGIGAIEVAKELGSGHYIIGVDGDQSYLAPNNIITSATKDVGRSLNIFTSNYLKTNTFEGGRLINYGLKEGVVGFIKNPKMIPFELEKEIDNLSSKIINQEIIVPYNKESYEKFIKE</sequence>
<keyword id="KW-0997">Cell inner membrane</keyword>
<keyword id="KW-1003">Cell membrane</keyword>
<keyword id="KW-0449">Lipoprotein</keyword>
<keyword id="KW-0472">Membrane</keyword>
<keyword id="KW-0564">Palmitate</keyword>
<keyword id="KW-0732">Signal</keyword>
<keyword id="KW-0813">Transport</keyword>